<sequence length="126" mass="14118">TFIAIKPDGVQRGLCGEVMKFIQPMKQHYLDLKDMPFYAGLCKYMASGPVFAMVWEGEGIVKMMLGETNPADSKPGSIRGDFCINIGRNIIHGSDTLENAKMEIGLWFKGEEFVAYAEKAKAWVYE</sequence>
<dbReference type="EC" id="2.7.4.6"/>
<dbReference type="SMR" id="P85292"/>
<dbReference type="GO" id="GO:0005737">
    <property type="term" value="C:cytoplasm"/>
    <property type="evidence" value="ECO:0007669"/>
    <property type="project" value="UniProtKB-SubCell"/>
</dbReference>
<dbReference type="GO" id="GO:0030027">
    <property type="term" value="C:lamellipodium"/>
    <property type="evidence" value="ECO:0007669"/>
    <property type="project" value="UniProtKB-SubCell"/>
</dbReference>
<dbReference type="GO" id="GO:0005634">
    <property type="term" value="C:nucleus"/>
    <property type="evidence" value="ECO:0007669"/>
    <property type="project" value="UniProtKB-SubCell"/>
</dbReference>
<dbReference type="GO" id="GO:0001726">
    <property type="term" value="C:ruffle"/>
    <property type="evidence" value="ECO:0007669"/>
    <property type="project" value="UniProtKB-SubCell"/>
</dbReference>
<dbReference type="GO" id="GO:0005524">
    <property type="term" value="F:ATP binding"/>
    <property type="evidence" value="ECO:0007669"/>
    <property type="project" value="UniProtKB-KW"/>
</dbReference>
<dbReference type="GO" id="GO:0046872">
    <property type="term" value="F:metal ion binding"/>
    <property type="evidence" value="ECO:0007669"/>
    <property type="project" value="UniProtKB-KW"/>
</dbReference>
<dbReference type="GO" id="GO:0004550">
    <property type="term" value="F:nucleoside diphosphate kinase activity"/>
    <property type="evidence" value="ECO:0007669"/>
    <property type="project" value="UniProtKB-EC"/>
</dbReference>
<dbReference type="GO" id="GO:0006241">
    <property type="term" value="P:CTP biosynthetic process"/>
    <property type="evidence" value="ECO:0007669"/>
    <property type="project" value="InterPro"/>
</dbReference>
<dbReference type="GO" id="GO:0006183">
    <property type="term" value="P:GTP biosynthetic process"/>
    <property type="evidence" value="ECO:0007669"/>
    <property type="project" value="InterPro"/>
</dbReference>
<dbReference type="GO" id="GO:0006228">
    <property type="term" value="P:UTP biosynthetic process"/>
    <property type="evidence" value="ECO:0007669"/>
    <property type="project" value="InterPro"/>
</dbReference>
<dbReference type="CDD" id="cd04413">
    <property type="entry name" value="NDPk_I"/>
    <property type="match status" value="1"/>
</dbReference>
<dbReference type="FunFam" id="3.30.70.141:FF:000039">
    <property type="entry name" value="Nucleoside diphosphate kinase B"/>
    <property type="match status" value="1"/>
</dbReference>
<dbReference type="Gene3D" id="3.30.70.141">
    <property type="entry name" value="Nucleoside diphosphate kinase-like domain"/>
    <property type="match status" value="1"/>
</dbReference>
<dbReference type="InterPro" id="IPR034907">
    <property type="entry name" value="NDK-like_dom"/>
</dbReference>
<dbReference type="InterPro" id="IPR036850">
    <property type="entry name" value="NDK-like_dom_sf"/>
</dbReference>
<dbReference type="InterPro" id="IPR001564">
    <property type="entry name" value="Nucleoside_diP_kinase"/>
</dbReference>
<dbReference type="PANTHER" id="PTHR11349">
    <property type="entry name" value="NUCLEOSIDE DIPHOSPHATE KINASE"/>
    <property type="match status" value="1"/>
</dbReference>
<dbReference type="Pfam" id="PF00334">
    <property type="entry name" value="NDK"/>
    <property type="match status" value="1"/>
</dbReference>
<dbReference type="PRINTS" id="PR01243">
    <property type="entry name" value="NUCDPKINASE"/>
</dbReference>
<dbReference type="SMART" id="SM00562">
    <property type="entry name" value="NDK"/>
    <property type="match status" value="1"/>
</dbReference>
<dbReference type="SUPFAM" id="SSF54919">
    <property type="entry name" value="Nucleoside diphosphate kinase, NDK"/>
    <property type="match status" value="1"/>
</dbReference>
<dbReference type="PROSITE" id="PS51374">
    <property type="entry name" value="NDPK_LIKE"/>
    <property type="match status" value="1"/>
</dbReference>
<proteinExistence type="evidence at protein level"/>
<keyword id="KW-0067">ATP-binding</keyword>
<keyword id="KW-0131">Cell cycle</keyword>
<keyword id="KW-0966">Cell projection</keyword>
<keyword id="KW-0963">Cytoplasm</keyword>
<keyword id="KW-0903">Direct protein sequencing</keyword>
<keyword id="KW-0418">Kinase</keyword>
<keyword id="KW-0460">Magnesium</keyword>
<keyword id="KW-0479">Metal-binding</keyword>
<keyword id="KW-0546">Nucleotide metabolism</keyword>
<keyword id="KW-0547">Nucleotide-binding</keyword>
<keyword id="KW-0539">Nucleus</keyword>
<keyword id="KW-0597">Phosphoprotein</keyword>
<keyword id="KW-0808">Transferase</keyword>
<accession>P85292</accession>
<evidence type="ECO:0000250" key="1">
    <source>
        <dbReference type="UniProtKB" id="P15531"/>
    </source>
</evidence>
<evidence type="ECO:0000250" key="2">
    <source>
        <dbReference type="UniProtKB" id="P22392"/>
    </source>
</evidence>
<evidence type="ECO:0000255" key="3"/>
<evidence type="ECO:0000255" key="4">
    <source>
        <dbReference type="PROSITE-ProRule" id="PRU10030"/>
    </source>
</evidence>
<evidence type="ECO:0000269" key="5">
    <source>
    </source>
</evidence>
<evidence type="ECO:0000303" key="6">
    <source>
    </source>
</evidence>
<evidence type="ECO:0000305" key="7"/>
<comment type="function">
    <text evidence="1">Major role in the synthesis of nucleoside triphosphates other than ATP.</text>
</comment>
<comment type="catalytic activity">
    <reaction evidence="1 4">
        <text>a 2'-deoxyribonucleoside 5'-diphosphate + ATP = a 2'-deoxyribonucleoside 5'-triphosphate + ADP</text>
        <dbReference type="Rhea" id="RHEA:44640"/>
        <dbReference type="ChEBI" id="CHEBI:30616"/>
        <dbReference type="ChEBI" id="CHEBI:61560"/>
        <dbReference type="ChEBI" id="CHEBI:73316"/>
        <dbReference type="ChEBI" id="CHEBI:456216"/>
        <dbReference type="EC" id="2.7.4.6"/>
    </reaction>
</comment>
<comment type="catalytic activity">
    <reaction evidence="1 4">
        <text>a ribonucleoside 5'-diphosphate + ATP = a ribonucleoside 5'-triphosphate + ADP</text>
        <dbReference type="Rhea" id="RHEA:18113"/>
        <dbReference type="ChEBI" id="CHEBI:30616"/>
        <dbReference type="ChEBI" id="CHEBI:57930"/>
        <dbReference type="ChEBI" id="CHEBI:61557"/>
        <dbReference type="ChEBI" id="CHEBI:456216"/>
        <dbReference type="EC" id="2.7.4.6"/>
    </reaction>
</comment>
<comment type="cofactor">
    <cofactor evidence="1">
        <name>Mg(2+)</name>
        <dbReference type="ChEBI" id="CHEBI:18420"/>
    </cofactor>
</comment>
<comment type="subcellular location">
    <subcellularLocation>
        <location evidence="2">Cytoplasm</location>
    </subcellularLocation>
    <subcellularLocation>
        <location evidence="2">Nucleus</location>
    </subcellularLocation>
    <subcellularLocation>
        <location evidence="2">Cell projection</location>
        <location evidence="2">Lamellipodium</location>
    </subcellularLocation>
    <subcellularLocation>
        <location evidence="2">Cell projection</location>
        <location evidence="2">Ruffle</location>
    </subcellularLocation>
</comment>
<comment type="similarity">
    <text evidence="3">Belongs to the NDK family.</text>
</comment>
<protein>
    <recommendedName>
        <fullName>Nucleoside diphosphate kinase B</fullName>
        <shortName>NDK B</shortName>
        <shortName>NDP kinase B</shortName>
        <ecNumber>2.7.4.6</ecNumber>
    </recommendedName>
</protein>
<organism>
    <name type="scientific">Macruronus magellanicus</name>
    <name type="common">Patagonian grenadier</name>
    <name type="synonym">Macruronus novaezelandiae magellanicus</name>
    <dbReference type="NCBI Taxonomy" id="92050"/>
    <lineage>
        <taxon>Eukaryota</taxon>
        <taxon>Metazoa</taxon>
        <taxon>Chordata</taxon>
        <taxon>Craniata</taxon>
        <taxon>Vertebrata</taxon>
        <taxon>Euteleostomi</taxon>
        <taxon>Actinopterygii</taxon>
        <taxon>Neopterygii</taxon>
        <taxon>Teleostei</taxon>
        <taxon>Neoteleostei</taxon>
        <taxon>Acanthomorphata</taxon>
        <taxon>Zeiogadaria</taxon>
        <taxon>Gadariae</taxon>
        <taxon>Gadiformes</taxon>
        <taxon>Gadoidei</taxon>
        <taxon>Merlucciidae</taxon>
        <taxon>Macruronus</taxon>
    </lineage>
</organism>
<gene>
    <name type="primary">nme2</name>
</gene>
<feature type="chain" id="PRO_0000306182" description="Nucleoside diphosphate kinase B">
    <location>
        <begin position="1" status="less than"/>
        <end position="126"/>
    </location>
</feature>
<feature type="active site" description="Pros-phosphohistidine intermediate" evidence="1 4">
    <location>
        <position position="92"/>
    </location>
</feature>
<feature type="binding site" evidence="1">
    <location>
        <position position="6"/>
    </location>
    <ligand>
        <name>ATP</name>
        <dbReference type="ChEBI" id="CHEBI:30616"/>
    </ligand>
</feature>
<feature type="binding site" evidence="1">
    <location>
        <position position="37"/>
    </location>
    <ligand>
        <name>ATP</name>
        <dbReference type="ChEBI" id="CHEBI:30616"/>
    </ligand>
</feature>
<feature type="binding site" evidence="1">
    <location>
        <position position="68"/>
    </location>
    <ligand>
        <name>ATP</name>
        <dbReference type="ChEBI" id="CHEBI:30616"/>
    </ligand>
</feature>
<feature type="binding site" evidence="1">
    <location>
        <position position="79"/>
    </location>
    <ligand>
        <name>ATP</name>
        <dbReference type="ChEBI" id="CHEBI:30616"/>
    </ligand>
</feature>
<feature type="binding site" evidence="1">
    <location>
        <position position="89"/>
    </location>
    <ligand>
        <name>ATP</name>
        <dbReference type="ChEBI" id="CHEBI:30616"/>
    </ligand>
</feature>
<feature type="non-consecutive residues" evidence="6">
    <location>
        <begin position="20"/>
        <end position="21"/>
    </location>
</feature>
<feature type="non-consecutive residues" evidence="6">
    <location>
        <begin position="24"/>
        <end position="25"/>
    </location>
</feature>
<feature type="non-consecutive residues" evidence="6">
    <location>
        <begin position="62"/>
        <end position="63"/>
    </location>
</feature>
<feature type="non-terminal residue" evidence="6">
    <location>
        <position position="1"/>
    </location>
</feature>
<reference evidence="7" key="1">
    <citation type="journal article" date="2007" name="J. Proteome Res.">
        <title>De novo mass spectrometry sequencing and characterization of species-specific peptides from nucleoside diphosphate kinase B for the classification of commercial fish species belonging to the family Merlucciidae.</title>
        <authorList>
            <person name="Carrera M."/>
            <person name="Canas B."/>
            <person name="Pineiro C."/>
            <person name="Vazquez J."/>
            <person name="Gallardo J.M."/>
        </authorList>
    </citation>
    <scope>PROTEIN SEQUENCE</scope>
    <source>
        <tissue evidence="5">White muscle</tissue>
    </source>
</reference>
<name>NDKB_MACMG</name>